<sequence length="136" mass="15232">MLQPKRTKFRKVHKGRNRGIASGTEVSFGTYGLKAVGRCRLTARQIEAARRAMSRAVKRQGKIWIRVFPDKPITEKPLEVRMGKGKGNVEYWVALIQPGKVLYEMDGVSEEVARNAFALAAAKLPVKTTFVTKTVM</sequence>
<comment type="function">
    <text evidence="1">Binds 23S rRNA and is also seen to make contacts with the A and possibly P site tRNAs.</text>
</comment>
<comment type="subunit">
    <text evidence="1">Part of the 50S ribosomal subunit.</text>
</comment>
<comment type="similarity">
    <text evidence="1">Belongs to the universal ribosomal protein uL16 family.</text>
</comment>
<name>RL16_HAEI8</name>
<feature type="chain" id="PRO_0000062113" description="Large ribosomal subunit protein uL16">
    <location>
        <begin position="1"/>
        <end position="136"/>
    </location>
</feature>
<evidence type="ECO:0000255" key="1">
    <source>
        <dbReference type="HAMAP-Rule" id="MF_01342"/>
    </source>
</evidence>
<evidence type="ECO:0000305" key="2"/>
<keyword id="KW-0687">Ribonucleoprotein</keyword>
<keyword id="KW-0689">Ribosomal protein</keyword>
<keyword id="KW-0694">RNA-binding</keyword>
<keyword id="KW-0699">rRNA-binding</keyword>
<keyword id="KW-0820">tRNA-binding</keyword>
<reference key="1">
    <citation type="journal article" date="2005" name="J. Bacteriol.">
        <title>Genomic sequence of an otitis media isolate of nontypeable Haemophilus influenzae: comparative study with H. influenzae serotype d, strain KW20.</title>
        <authorList>
            <person name="Harrison A."/>
            <person name="Dyer D.W."/>
            <person name="Gillaspy A."/>
            <person name="Ray W.C."/>
            <person name="Mungur R."/>
            <person name="Carson M.B."/>
            <person name="Zhong H."/>
            <person name="Gipson J."/>
            <person name="Gipson M."/>
            <person name="Johnson L.S."/>
            <person name="Lewis L."/>
            <person name="Bakaletz L.O."/>
            <person name="Munson R.S. Jr."/>
        </authorList>
    </citation>
    <scope>NUCLEOTIDE SEQUENCE [LARGE SCALE GENOMIC DNA]</scope>
    <source>
        <strain>86-028NP</strain>
    </source>
</reference>
<organism>
    <name type="scientific">Haemophilus influenzae (strain 86-028NP)</name>
    <dbReference type="NCBI Taxonomy" id="281310"/>
    <lineage>
        <taxon>Bacteria</taxon>
        <taxon>Pseudomonadati</taxon>
        <taxon>Pseudomonadota</taxon>
        <taxon>Gammaproteobacteria</taxon>
        <taxon>Pasteurellales</taxon>
        <taxon>Pasteurellaceae</taxon>
        <taxon>Haemophilus</taxon>
    </lineage>
</organism>
<gene>
    <name evidence="1" type="primary">rplP</name>
    <name type="ordered locus">NTHI0946</name>
</gene>
<proteinExistence type="inferred from homology"/>
<dbReference type="EMBL" id="CP000057">
    <property type="protein sequence ID" value="AAX87832.1"/>
    <property type="molecule type" value="Genomic_DNA"/>
</dbReference>
<dbReference type="RefSeq" id="WP_005648425.1">
    <property type="nucleotide sequence ID" value="NC_007146.2"/>
</dbReference>
<dbReference type="SMR" id="Q4QMB5"/>
<dbReference type="GeneID" id="93219824"/>
<dbReference type="KEGG" id="hit:NTHI0946"/>
<dbReference type="HOGENOM" id="CLU_078858_2_1_6"/>
<dbReference type="Proteomes" id="UP000002525">
    <property type="component" value="Chromosome"/>
</dbReference>
<dbReference type="GO" id="GO:0022625">
    <property type="term" value="C:cytosolic large ribosomal subunit"/>
    <property type="evidence" value="ECO:0007669"/>
    <property type="project" value="TreeGrafter"/>
</dbReference>
<dbReference type="GO" id="GO:0019843">
    <property type="term" value="F:rRNA binding"/>
    <property type="evidence" value="ECO:0007669"/>
    <property type="project" value="UniProtKB-UniRule"/>
</dbReference>
<dbReference type="GO" id="GO:0003735">
    <property type="term" value="F:structural constituent of ribosome"/>
    <property type="evidence" value="ECO:0007669"/>
    <property type="project" value="InterPro"/>
</dbReference>
<dbReference type="GO" id="GO:0000049">
    <property type="term" value="F:tRNA binding"/>
    <property type="evidence" value="ECO:0007669"/>
    <property type="project" value="UniProtKB-KW"/>
</dbReference>
<dbReference type="GO" id="GO:0006412">
    <property type="term" value="P:translation"/>
    <property type="evidence" value="ECO:0007669"/>
    <property type="project" value="UniProtKB-UniRule"/>
</dbReference>
<dbReference type="CDD" id="cd01433">
    <property type="entry name" value="Ribosomal_L16_L10e"/>
    <property type="match status" value="1"/>
</dbReference>
<dbReference type="FunFam" id="3.90.1170.10:FF:000001">
    <property type="entry name" value="50S ribosomal protein L16"/>
    <property type="match status" value="1"/>
</dbReference>
<dbReference type="Gene3D" id="3.90.1170.10">
    <property type="entry name" value="Ribosomal protein L10e/L16"/>
    <property type="match status" value="1"/>
</dbReference>
<dbReference type="HAMAP" id="MF_01342">
    <property type="entry name" value="Ribosomal_uL16"/>
    <property type="match status" value="1"/>
</dbReference>
<dbReference type="InterPro" id="IPR047873">
    <property type="entry name" value="Ribosomal_uL16"/>
</dbReference>
<dbReference type="InterPro" id="IPR000114">
    <property type="entry name" value="Ribosomal_uL16_bact-type"/>
</dbReference>
<dbReference type="InterPro" id="IPR020798">
    <property type="entry name" value="Ribosomal_uL16_CS"/>
</dbReference>
<dbReference type="InterPro" id="IPR016180">
    <property type="entry name" value="Ribosomal_uL16_dom"/>
</dbReference>
<dbReference type="InterPro" id="IPR036920">
    <property type="entry name" value="Ribosomal_uL16_sf"/>
</dbReference>
<dbReference type="NCBIfam" id="TIGR01164">
    <property type="entry name" value="rplP_bact"/>
    <property type="match status" value="1"/>
</dbReference>
<dbReference type="PANTHER" id="PTHR12220">
    <property type="entry name" value="50S/60S RIBOSOMAL PROTEIN L16"/>
    <property type="match status" value="1"/>
</dbReference>
<dbReference type="PANTHER" id="PTHR12220:SF13">
    <property type="entry name" value="LARGE RIBOSOMAL SUBUNIT PROTEIN UL16M"/>
    <property type="match status" value="1"/>
</dbReference>
<dbReference type="Pfam" id="PF00252">
    <property type="entry name" value="Ribosomal_L16"/>
    <property type="match status" value="1"/>
</dbReference>
<dbReference type="PRINTS" id="PR00060">
    <property type="entry name" value="RIBOSOMALL16"/>
</dbReference>
<dbReference type="SUPFAM" id="SSF54686">
    <property type="entry name" value="Ribosomal protein L16p/L10e"/>
    <property type="match status" value="1"/>
</dbReference>
<dbReference type="PROSITE" id="PS00586">
    <property type="entry name" value="RIBOSOMAL_L16_1"/>
    <property type="match status" value="1"/>
</dbReference>
<dbReference type="PROSITE" id="PS00701">
    <property type="entry name" value="RIBOSOMAL_L16_2"/>
    <property type="match status" value="1"/>
</dbReference>
<accession>Q4QMB5</accession>
<protein>
    <recommendedName>
        <fullName evidence="1">Large ribosomal subunit protein uL16</fullName>
    </recommendedName>
    <alternativeName>
        <fullName evidence="2">50S ribosomal protein L16</fullName>
    </alternativeName>
</protein>